<evidence type="ECO:0000255" key="1">
    <source>
        <dbReference type="HAMAP-Rule" id="MF_01310"/>
    </source>
</evidence>
<evidence type="ECO:0000305" key="2"/>
<reference key="1">
    <citation type="journal article" date="2008" name="Chem. Biol. Interact.">
        <title>Extending the Bacillus cereus group genomics to putative food-borne pathogens of different toxicity.</title>
        <authorList>
            <person name="Lapidus A."/>
            <person name="Goltsman E."/>
            <person name="Auger S."/>
            <person name="Galleron N."/>
            <person name="Segurens B."/>
            <person name="Dossat C."/>
            <person name="Land M.L."/>
            <person name="Broussolle V."/>
            <person name="Brillard J."/>
            <person name="Guinebretiere M.-H."/>
            <person name="Sanchis V."/>
            <person name="Nguen-the C."/>
            <person name="Lereclus D."/>
            <person name="Richardson P."/>
            <person name="Wincker P."/>
            <person name="Weissenbach J."/>
            <person name="Ehrlich S.D."/>
            <person name="Sorokin A."/>
        </authorList>
    </citation>
    <scope>NUCLEOTIDE SEQUENCE [LARGE SCALE GENOMIC DNA]</scope>
    <source>
        <strain>KBAB4</strain>
    </source>
</reference>
<gene>
    <name evidence="1" type="primary">rpsK</name>
    <name type="ordered locus">BcerKBAB4_0131</name>
</gene>
<comment type="function">
    <text evidence="1">Located on the platform of the 30S subunit, it bridges several disparate RNA helices of the 16S rRNA. Forms part of the Shine-Dalgarno cleft in the 70S ribosome.</text>
</comment>
<comment type="subunit">
    <text evidence="1">Part of the 30S ribosomal subunit. Interacts with proteins S7 and S18. Binds to IF-3.</text>
</comment>
<comment type="similarity">
    <text evidence="1">Belongs to the universal ribosomal protein uS11 family.</text>
</comment>
<proteinExistence type="inferred from homology"/>
<dbReference type="EMBL" id="CP000903">
    <property type="protein sequence ID" value="ABY41400.1"/>
    <property type="molecule type" value="Genomic_DNA"/>
</dbReference>
<dbReference type="RefSeq" id="WP_002009745.1">
    <property type="nucleotide sequence ID" value="NZ_CAKMRX030000129.1"/>
</dbReference>
<dbReference type="SMR" id="A9VPA3"/>
<dbReference type="GeneID" id="66264795"/>
<dbReference type="KEGG" id="bwe:BcerKBAB4_0131"/>
<dbReference type="eggNOG" id="COG0100">
    <property type="taxonomic scope" value="Bacteria"/>
</dbReference>
<dbReference type="HOGENOM" id="CLU_072439_5_0_9"/>
<dbReference type="Proteomes" id="UP000002154">
    <property type="component" value="Chromosome"/>
</dbReference>
<dbReference type="GO" id="GO:1990904">
    <property type="term" value="C:ribonucleoprotein complex"/>
    <property type="evidence" value="ECO:0007669"/>
    <property type="project" value="UniProtKB-KW"/>
</dbReference>
<dbReference type="GO" id="GO:0005840">
    <property type="term" value="C:ribosome"/>
    <property type="evidence" value="ECO:0007669"/>
    <property type="project" value="UniProtKB-KW"/>
</dbReference>
<dbReference type="GO" id="GO:0019843">
    <property type="term" value="F:rRNA binding"/>
    <property type="evidence" value="ECO:0007669"/>
    <property type="project" value="UniProtKB-UniRule"/>
</dbReference>
<dbReference type="GO" id="GO:0003735">
    <property type="term" value="F:structural constituent of ribosome"/>
    <property type="evidence" value="ECO:0007669"/>
    <property type="project" value="InterPro"/>
</dbReference>
<dbReference type="GO" id="GO:0006412">
    <property type="term" value="P:translation"/>
    <property type="evidence" value="ECO:0007669"/>
    <property type="project" value="UniProtKB-UniRule"/>
</dbReference>
<dbReference type="FunFam" id="3.30.420.80:FF:000001">
    <property type="entry name" value="30S ribosomal protein S11"/>
    <property type="match status" value="1"/>
</dbReference>
<dbReference type="Gene3D" id="3.30.420.80">
    <property type="entry name" value="Ribosomal protein S11"/>
    <property type="match status" value="1"/>
</dbReference>
<dbReference type="HAMAP" id="MF_01310">
    <property type="entry name" value="Ribosomal_uS11"/>
    <property type="match status" value="1"/>
</dbReference>
<dbReference type="InterPro" id="IPR001971">
    <property type="entry name" value="Ribosomal_uS11"/>
</dbReference>
<dbReference type="InterPro" id="IPR019981">
    <property type="entry name" value="Ribosomal_uS11_bac-type"/>
</dbReference>
<dbReference type="InterPro" id="IPR018102">
    <property type="entry name" value="Ribosomal_uS11_CS"/>
</dbReference>
<dbReference type="InterPro" id="IPR036967">
    <property type="entry name" value="Ribosomal_uS11_sf"/>
</dbReference>
<dbReference type="NCBIfam" id="NF003698">
    <property type="entry name" value="PRK05309.1"/>
    <property type="match status" value="1"/>
</dbReference>
<dbReference type="NCBIfam" id="TIGR03632">
    <property type="entry name" value="uS11_bact"/>
    <property type="match status" value="1"/>
</dbReference>
<dbReference type="PANTHER" id="PTHR11759">
    <property type="entry name" value="40S RIBOSOMAL PROTEIN S14/30S RIBOSOMAL PROTEIN S11"/>
    <property type="match status" value="1"/>
</dbReference>
<dbReference type="Pfam" id="PF00411">
    <property type="entry name" value="Ribosomal_S11"/>
    <property type="match status" value="1"/>
</dbReference>
<dbReference type="PIRSF" id="PIRSF002131">
    <property type="entry name" value="Ribosomal_S11"/>
    <property type="match status" value="1"/>
</dbReference>
<dbReference type="SUPFAM" id="SSF53137">
    <property type="entry name" value="Translational machinery components"/>
    <property type="match status" value="1"/>
</dbReference>
<dbReference type="PROSITE" id="PS00054">
    <property type="entry name" value="RIBOSOMAL_S11"/>
    <property type="match status" value="1"/>
</dbReference>
<accession>A9VPA3</accession>
<name>RS11_BACMK</name>
<feature type="chain" id="PRO_1000141055" description="Small ribosomal subunit protein uS11">
    <location>
        <begin position="1"/>
        <end position="129"/>
    </location>
</feature>
<protein>
    <recommendedName>
        <fullName evidence="1">Small ribosomal subunit protein uS11</fullName>
    </recommendedName>
    <alternativeName>
        <fullName evidence="2">30S ribosomal protein S11</fullName>
    </alternativeName>
</protein>
<keyword id="KW-0687">Ribonucleoprotein</keyword>
<keyword id="KW-0689">Ribosomal protein</keyword>
<keyword id="KW-0694">RNA-binding</keyword>
<keyword id="KW-0699">rRNA-binding</keyword>
<sequence>MARKTNTRKKRVKKNIEAGIAHIRSTFNNTIVTLTDTHGNALSWSSAGALGFRGSRKSTPFAAQMAAEAASKVAMEHGLKTLEVTVKGPGAGREAAIRALQAAGLEVTAIRDVTPVPHNGCRPPKRRRV</sequence>
<organism>
    <name type="scientific">Bacillus mycoides (strain KBAB4)</name>
    <name type="common">Bacillus weihenstephanensis</name>
    <dbReference type="NCBI Taxonomy" id="315730"/>
    <lineage>
        <taxon>Bacteria</taxon>
        <taxon>Bacillati</taxon>
        <taxon>Bacillota</taxon>
        <taxon>Bacilli</taxon>
        <taxon>Bacillales</taxon>
        <taxon>Bacillaceae</taxon>
        <taxon>Bacillus</taxon>
        <taxon>Bacillus cereus group</taxon>
    </lineage>
</organism>